<evidence type="ECO:0000250" key="1"/>
<evidence type="ECO:0000255" key="2"/>
<evidence type="ECO:0000305" key="3"/>
<protein>
    <recommendedName>
        <fullName>Na(+)/H(+) antiporter subunit C1</fullName>
    </recommendedName>
    <alternativeName>
        <fullName>Mnh complex subunit C1</fullName>
    </alternativeName>
</protein>
<organism>
    <name type="scientific">Staphylococcus aureus (strain JH1)</name>
    <dbReference type="NCBI Taxonomy" id="359787"/>
    <lineage>
        <taxon>Bacteria</taxon>
        <taxon>Bacillati</taxon>
        <taxon>Bacillota</taxon>
        <taxon>Bacilli</taxon>
        <taxon>Bacillales</taxon>
        <taxon>Staphylococcaceae</taxon>
        <taxon>Staphylococcus</taxon>
    </lineage>
</organism>
<gene>
    <name type="primary">mnhC1</name>
    <name type="ordered locus">SaurJH1_0969</name>
</gene>
<reference key="1">
    <citation type="submission" date="2007-06" db="EMBL/GenBank/DDBJ databases">
        <title>Complete sequence of chromosome of Staphylococcus aureus subsp. aureus JH1.</title>
        <authorList>
            <consortium name="US DOE Joint Genome Institute"/>
            <person name="Copeland A."/>
            <person name="Lucas S."/>
            <person name="Lapidus A."/>
            <person name="Barry K."/>
            <person name="Detter J.C."/>
            <person name="Glavina del Rio T."/>
            <person name="Hammon N."/>
            <person name="Israni S."/>
            <person name="Dalin E."/>
            <person name="Tice H."/>
            <person name="Pitluck S."/>
            <person name="Chain P."/>
            <person name="Malfatti S."/>
            <person name="Shin M."/>
            <person name="Vergez L."/>
            <person name="Schmutz J."/>
            <person name="Larimer F."/>
            <person name="Land M."/>
            <person name="Hauser L."/>
            <person name="Kyrpides N."/>
            <person name="Ivanova N."/>
            <person name="Tomasz A."/>
            <person name="Richardson P."/>
        </authorList>
    </citation>
    <scope>NUCLEOTIDE SEQUENCE [LARGE SCALE GENOMIC DNA]</scope>
    <source>
        <strain>JH1</strain>
    </source>
</reference>
<feature type="chain" id="PRO_0000372118" description="Na(+)/H(+) antiporter subunit C1">
    <location>
        <begin position="1"/>
        <end position="113"/>
    </location>
</feature>
<feature type="transmembrane region" description="Helical" evidence="2">
    <location>
        <begin position="1"/>
        <end position="21"/>
    </location>
</feature>
<feature type="transmembrane region" description="Helical" evidence="2">
    <location>
        <begin position="28"/>
        <end position="48"/>
    </location>
</feature>
<feature type="transmembrane region" description="Helical" evidence="2">
    <location>
        <begin position="72"/>
        <end position="92"/>
    </location>
</feature>
<keyword id="KW-0050">Antiport</keyword>
<keyword id="KW-1003">Cell membrane</keyword>
<keyword id="KW-0375">Hydrogen ion transport</keyword>
<keyword id="KW-0406">Ion transport</keyword>
<keyword id="KW-0472">Membrane</keyword>
<keyword id="KW-0915">Sodium</keyword>
<keyword id="KW-0739">Sodium transport</keyword>
<keyword id="KW-0812">Transmembrane</keyword>
<keyword id="KW-1133">Transmembrane helix</keyword>
<keyword id="KW-0813">Transport</keyword>
<sequence>MEIIMIFVSGILTAISVYLVLSKSLIRIVMGTTLLTHAANLFLITMGGLKHGTVPIYEANVKSYVDPIPQALILTAIVIAFATTAFFLVLAFRTYKELGTDNVESMKGVPEDD</sequence>
<accession>A6U057</accession>
<name>MNHC1_STAA2</name>
<comment type="function">
    <text evidence="1">Mnh complex is a Na(+)/H(+) antiporter involved in Na(+) excretion.</text>
</comment>
<comment type="subunit">
    <text evidence="1">May form a heterooligomeric complex that consists of seven subunits: mnhA1, mnhB1, mnhC1, mnhD1, mnhE1, mnhF1 and mnhG1.</text>
</comment>
<comment type="subcellular location">
    <subcellularLocation>
        <location evidence="3">Cell membrane</location>
        <topology evidence="3">Multi-pass membrane protein</topology>
    </subcellularLocation>
</comment>
<comment type="similarity">
    <text evidence="3">Belongs to the CPA3 antiporters (TC 2.A.63) subunit C family.</text>
</comment>
<dbReference type="EMBL" id="CP000736">
    <property type="protein sequence ID" value="ABR51825.1"/>
    <property type="molecule type" value="Genomic_DNA"/>
</dbReference>
<dbReference type="SMR" id="A6U057"/>
<dbReference type="KEGG" id="sah:SaurJH1_0969"/>
<dbReference type="HOGENOM" id="CLU_082058_3_1_9"/>
<dbReference type="GO" id="GO:0005886">
    <property type="term" value="C:plasma membrane"/>
    <property type="evidence" value="ECO:0007669"/>
    <property type="project" value="UniProtKB-SubCell"/>
</dbReference>
<dbReference type="GO" id="GO:0015297">
    <property type="term" value="F:antiporter activity"/>
    <property type="evidence" value="ECO:0007669"/>
    <property type="project" value="UniProtKB-KW"/>
</dbReference>
<dbReference type="GO" id="GO:0008324">
    <property type="term" value="F:monoatomic cation transmembrane transporter activity"/>
    <property type="evidence" value="ECO:0007669"/>
    <property type="project" value="InterPro"/>
</dbReference>
<dbReference type="GO" id="GO:1902600">
    <property type="term" value="P:proton transmembrane transport"/>
    <property type="evidence" value="ECO:0007669"/>
    <property type="project" value="UniProtKB-KW"/>
</dbReference>
<dbReference type="GO" id="GO:0006814">
    <property type="term" value="P:sodium ion transport"/>
    <property type="evidence" value="ECO:0007669"/>
    <property type="project" value="UniProtKB-KW"/>
</dbReference>
<dbReference type="Gene3D" id="1.10.287.3510">
    <property type="match status" value="1"/>
</dbReference>
<dbReference type="InterPro" id="IPR050601">
    <property type="entry name" value="CPA3_antiporter_subunitC"/>
</dbReference>
<dbReference type="InterPro" id="IPR006673">
    <property type="entry name" value="Mnh_C1_su"/>
</dbReference>
<dbReference type="InterPro" id="IPR039428">
    <property type="entry name" value="NUOK/Mnh_C1-like"/>
</dbReference>
<dbReference type="NCBIfam" id="TIGR00941">
    <property type="entry name" value="2a6301s03"/>
    <property type="match status" value="1"/>
</dbReference>
<dbReference type="NCBIfam" id="NF006372">
    <property type="entry name" value="PRK08600.1"/>
    <property type="match status" value="1"/>
</dbReference>
<dbReference type="NCBIfam" id="NF006573">
    <property type="entry name" value="PRK09094.1"/>
    <property type="match status" value="1"/>
</dbReference>
<dbReference type="NCBIfam" id="NF009303">
    <property type="entry name" value="PRK12660.1"/>
    <property type="match status" value="1"/>
</dbReference>
<dbReference type="PANTHER" id="PTHR34583">
    <property type="entry name" value="ANTIPORTER SUBUNIT MNHC2-RELATED"/>
    <property type="match status" value="1"/>
</dbReference>
<dbReference type="PANTHER" id="PTHR34583:SF2">
    <property type="entry name" value="ANTIPORTER SUBUNIT MNHC2-RELATED"/>
    <property type="match status" value="1"/>
</dbReference>
<dbReference type="Pfam" id="PF00420">
    <property type="entry name" value="Oxidored_q2"/>
    <property type="match status" value="1"/>
</dbReference>
<proteinExistence type="inferred from homology"/>